<comment type="function">
    <text evidence="1">Specifically dimethylates two adjacent adenosines (A1518 and A1519) in the loop of a conserved hairpin near the 3'-end of 16S rRNA in the 30S particle. May play a critical role in biogenesis of 30S subunits.</text>
</comment>
<comment type="catalytic activity">
    <reaction evidence="1">
        <text>adenosine(1518)/adenosine(1519) in 16S rRNA + 4 S-adenosyl-L-methionine = N(6)-dimethyladenosine(1518)/N(6)-dimethyladenosine(1519) in 16S rRNA + 4 S-adenosyl-L-homocysteine + 4 H(+)</text>
        <dbReference type="Rhea" id="RHEA:19609"/>
        <dbReference type="Rhea" id="RHEA-COMP:10232"/>
        <dbReference type="Rhea" id="RHEA-COMP:10233"/>
        <dbReference type="ChEBI" id="CHEBI:15378"/>
        <dbReference type="ChEBI" id="CHEBI:57856"/>
        <dbReference type="ChEBI" id="CHEBI:59789"/>
        <dbReference type="ChEBI" id="CHEBI:74411"/>
        <dbReference type="ChEBI" id="CHEBI:74493"/>
        <dbReference type="EC" id="2.1.1.182"/>
    </reaction>
</comment>
<comment type="subcellular location">
    <subcellularLocation>
        <location evidence="1">Cytoplasm</location>
    </subcellularLocation>
</comment>
<comment type="similarity">
    <text evidence="1">Belongs to the class I-like SAM-binding methyltransferase superfamily. rRNA adenine N(6)-methyltransferase family. RsmA subfamily.</text>
</comment>
<name>RSMA_CLOD6</name>
<sequence length="289" mass="32444">MDRLSSHNATKEVVQKYNFKFSKSLGQNFLIDSNIIDKILSGARITRGDNIIEVGPGIGTLTREMGKIAEKVVAIEIDRNLIPILKDTLSDLDNTEVVNQDILKVDIQELVKDKLNGGPVKLVANLPYYITTPIVMKFLEEDIPVTDIVVMVQKEVADRMNAIPGTKDYGALSIAVQYYCDTEIVAKAPRHMFIPQPNVDSTVIGLHVRDKRKYDVHNEDIFFKTVKASFGQRRKTLLNSLGGLGFLNKDEIREILKEANIDEKRRGETLSIEEFSVLSNIINTKVSSK</sequence>
<accession>Q181C1</accession>
<protein>
    <recommendedName>
        <fullName evidence="1">Ribosomal RNA small subunit methyltransferase A</fullName>
        <ecNumber evidence="1">2.1.1.182</ecNumber>
    </recommendedName>
    <alternativeName>
        <fullName evidence="1">16S rRNA (adenine(1518)-N(6)/adenine(1519)-N(6))-dimethyltransferase</fullName>
    </alternativeName>
    <alternativeName>
        <fullName evidence="1">16S rRNA dimethyladenosine transferase</fullName>
    </alternativeName>
    <alternativeName>
        <fullName evidence="1">16S rRNA dimethylase</fullName>
    </alternativeName>
    <alternativeName>
        <fullName evidence="1">S-adenosylmethionine-6-N', N'-adenosyl(rRNA) dimethyltransferase</fullName>
    </alternativeName>
</protein>
<evidence type="ECO:0000255" key="1">
    <source>
        <dbReference type="HAMAP-Rule" id="MF_00607"/>
    </source>
</evidence>
<organism>
    <name type="scientific">Clostridioides difficile (strain 630)</name>
    <name type="common">Peptoclostridium difficile</name>
    <dbReference type="NCBI Taxonomy" id="272563"/>
    <lineage>
        <taxon>Bacteria</taxon>
        <taxon>Bacillati</taxon>
        <taxon>Bacillota</taxon>
        <taxon>Clostridia</taxon>
        <taxon>Peptostreptococcales</taxon>
        <taxon>Peptostreptococcaceae</taxon>
        <taxon>Clostridioides</taxon>
    </lineage>
</organism>
<proteinExistence type="inferred from homology"/>
<feature type="chain" id="PRO_0000257274" description="Ribosomal RNA small subunit methyltransferase A">
    <location>
        <begin position="1"/>
        <end position="289"/>
    </location>
</feature>
<feature type="binding site" evidence="1">
    <location>
        <position position="28"/>
    </location>
    <ligand>
        <name>S-adenosyl-L-methionine</name>
        <dbReference type="ChEBI" id="CHEBI:59789"/>
    </ligand>
</feature>
<feature type="binding site" evidence="1">
    <location>
        <position position="30"/>
    </location>
    <ligand>
        <name>S-adenosyl-L-methionine</name>
        <dbReference type="ChEBI" id="CHEBI:59789"/>
    </ligand>
</feature>
<feature type="binding site" evidence="1">
    <location>
        <position position="55"/>
    </location>
    <ligand>
        <name>S-adenosyl-L-methionine</name>
        <dbReference type="ChEBI" id="CHEBI:59789"/>
    </ligand>
</feature>
<feature type="binding site" evidence="1">
    <location>
        <position position="76"/>
    </location>
    <ligand>
        <name>S-adenosyl-L-methionine</name>
        <dbReference type="ChEBI" id="CHEBI:59789"/>
    </ligand>
</feature>
<feature type="binding site" evidence="1">
    <location>
        <position position="101"/>
    </location>
    <ligand>
        <name>S-adenosyl-L-methionine</name>
        <dbReference type="ChEBI" id="CHEBI:59789"/>
    </ligand>
</feature>
<feature type="binding site" evidence="1">
    <location>
        <position position="125"/>
    </location>
    <ligand>
        <name>S-adenosyl-L-methionine</name>
        <dbReference type="ChEBI" id="CHEBI:59789"/>
    </ligand>
</feature>
<reference key="1">
    <citation type="journal article" date="2006" name="Nat. Genet.">
        <title>The multidrug-resistant human pathogen Clostridium difficile has a highly mobile, mosaic genome.</title>
        <authorList>
            <person name="Sebaihia M."/>
            <person name="Wren B.W."/>
            <person name="Mullany P."/>
            <person name="Fairweather N.F."/>
            <person name="Minton N."/>
            <person name="Stabler R."/>
            <person name="Thomson N.R."/>
            <person name="Roberts A.P."/>
            <person name="Cerdeno-Tarraga A.M."/>
            <person name="Wang H."/>
            <person name="Holden M.T.G."/>
            <person name="Wright A."/>
            <person name="Churcher C."/>
            <person name="Quail M.A."/>
            <person name="Baker S."/>
            <person name="Bason N."/>
            <person name="Brooks K."/>
            <person name="Chillingworth T."/>
            <person name="Cronin A."/>
            <person name="Davis P."/>
            <person name="Dowd L."/>
            <person name="Fraser A."/>
            <person name="Feltwell T."/>
            <person name="Hance Z."/>
            <person name="Holroyd S."/>
            <person name="Jagels K."/>
            <person name="Moule S."/>
            <person name="Mungall K."/>
            <person name="Price C."/>
            <person name="Rabbinowitsch E."/>
            <person name="Sharp S."/>
            <person name="Simmonds M."/>
            <person name="Stevens K."/>
            <person name="Unwin L."/>
            <person name="Whithead S."/>
            <person name="Dupuy B."/>
            <person name="Dougan G."/>
            <person name="Barrell B."/>
            <person name="Parkhill J."/>
        </authorList>
    </citation>
    <scope>NUCLEOTIDE SEQUENCE [LARGE SCALE GENOMIC DNA]</scope>
    <source>
        <strain>630</strain>
    </source>
</reference>
<gene>
    <name evidence="1" type="primary">rsmA</name>
    <name evidence="1" type="synonym">ksgA</name>
    <name type="ordered locus">CD630_35230</name>
</gene>
<dbReference type="EC" id="2.1.1.182" evidence="1"/>
<dbReference type="EMBL" id="AM180355">
    <property type="protein sequence ID" value="CAJ70427.1"/>
    <property type="molecule type" value="Genomic_DNA"/>
</dbReference>
<dbReference type="RefSeq" id="WP_009892086.1">
    <property type="nucleotide sequence ID" value="NZ_JAUPES010000009.1"/>
</dbReference>
<dbReference type="RefSeq" id="YP_001090044.1">
    <property type="nucleotide sequence ID" value="NC_009089.1"/>
</dbReference>
<dbReference type="SMR" id="Q181C1"/>
<dbReference type="STRING" id="272563.CD630_35230"/>
<dbReference type="EnsemblBacteria" id="CAJ70427">
    <property type="protein sequence ID" value="CAJ70427"/>
    <property type="gene ID" value="CD630_35230"/>
</dbReference>
<dbReference type="KEGG" id="cdf:CD630_35230"/>
<dbReference type="KEGG" id="pdc:CDIF630_03837"/>
<dbReference type="PATRIC" id="fig|272563.120.peg.3723"/>
<dbReference type="eggNOG" id="COG0030">
    <property type="taxonomic scope" value="Bacteria"/>
</dbReference>
<dbReference type="OrthoDB" id="9814755at2"/>
<dbReference type="PhylomeDB" id="Q181C1"/>
<dbReference type="BioCyc" id="PDIF272563:G12WB-3704-MONOMER"/>
<dbReference type="Proteomes" id="UP000001978">
    <property type="component" value="Chromosome"/>
</dbReference>
<dbReference type="GO" id="GO:0005829">
    <property type="term" value="C:cytosol"/>
    <property type="evidence" value="ECO:0007669"/>
    <property type="project" value="TreeGrafter"/>
</dbReference>
<dbReference type="GO" id="GO:0052908">
    <property type="term" value="F:16S rRNA (adenine(1518)-N(6)/adenine(1519)-N(6))-dimethyltransferase activity"/>
    <property type="evidence" value="ECO:0007669"/>
    <property type="project" value="UniProtKB-EC"/>
</dbReference>
<dbReference type="GO" id="GO:0003723">
    <property type="term" value="F:RNA binding"/>
    <property type="evidence" value="ECO:0007669"/>
    <property type="project" value="UniProtKB-KW"/>
</dbReference>
<dbReference type="CDD" id="cd02440">
    <property type="entry name" value="AdoMet_MTases"/>
    <property type="match status" value="1"/>
</dbReference>
<dbReference type="FunFam" id="3.40.50.150:FF:000023">
    <property type="entry name" value="Ribosomal RNA small subunit methyltransferase A"/>
    <property type="match status" value="1"/>
</dbReference>
<dbReference type="Gene3D" id="1.10.8.100">
    <property type="entry name" value="Ribosomal RNA adenine dimethylase-like, domain 2"/>
    <property type="match status" value="1"/>
</dbReference>
<dbReference type="Gene3D" id="3.40.50.150">
    <property type="entry name" value="Vaccinia Virus protein VP39"/>
    <property type="match status" value="1"/>
</dbReference>
<dbReference type="HAMAP" id="MF_00607">
    <property type="entry name" value="16SrRNA_methyltr_A"/>
    <property type="match status" value="1"/>
</dbReference>
<dbReference type="InterPro" id="IPR001737">
    <property type="entry name" value="KsgA/Erm"/>
</dbReference>
<dbReference type="InterPro" id="IPR023165">
    <property type="entry name" value="rRNA_Ade_diMease-like_C"/>
</dbReference>
<dbReference type="InterPro" id="IPR020596">
    <property type="entry name" value="rRNA_Ade_Mease_Trfase_CS"/>
</dbReference>
<dbReference type="InterPro" id="IPR020598">
    <property type="entry name" value="rRNA_Ade_methylase_Trfase_N"/>
</dbReference>
<dbReference type="InterPro" id="IPR011530">
    <property type="entry name" value="rRNA_adenine_dimethylase"/>
</dbReference>
<dbReference type="InterPro" id="IPR029063">
    <property type="entry name" value="SAM-dependent_MTases_sf"/>
</dbReference>
<dbReference type="NCBIfam" id="TIGR00755">
    <property type="entry name" value="ksgA"/>
    <property type="match status" value="1"/>
</dbReference>
<dbReference type="PANTHER" id="PTHR11727">
    <property type="entry name" value="DIMETHYLADENOSINE TRANSFERASE"/>
    <property type="match status" value="1"/>
</dbReference>
<dbReference type="PANTHER" id="PTHR11727:SF7">
    <property type="entry name" value="DIMETHYLADENOSINE TRANSFERASE-RELATED"/>
    <property type="match status" value="1"/>
</dbReference>
<dbReference type="Pfam" id="PF00398">
    <property type="entry name" value="RrnaAD"/>
    <property type="match status" value="1"/>
</dbReference>
<dbReference type="SMART" id="SM00650">
    <property type="entry name" value="rADc"/>
    <property type="match status" value="1"/>
</dbReference>
<dbReference type="SUPFAM" id="SSF53335">
    <property type="entry name" value="S-adenosyl-L-methionine-dependent methyltransferases"/>
    <property type="match status" value="1"/>
</dbReference>
<dbReference type="PROSITE" id="PS01131">
    <property type="entry name" value="RRNA_A_DIMETH"/>
    <property type="match status" value="1"/>
</dbReference>
<dbReference type="PROSITE" id="PS51689">
    <property type="entry name" value="SAM_RNA_A_N6_MT"/>
    <property type="match status" value="1"/>
</dbReference>
<keyword id="KW-0963">Cytoplasm</keyword>
<keyword id="KW-0489">Methyltransferase</keyword>
<keyword id="KW-1185">Reference proteome</keyword>
<keyword id="KW-0694">RNA-binding</keyword>
<keyword id="KW-0698">rRNA processing</keyword>
<keyword id="KW-0949">S-adenosyl-L-methionine</keyword>
<keyword id="KW-0808">Transferase</keyword>